<proteinExistence type="inferred from homology"/>
<sequence>MVTMKDLLECGVHFGHQTRRWNPKTKKFIFGVRKNIHIIDLQKTLRYFRYTYNIVRDASAQGKSIMFVGTKKQANETLKEFAESIQVPYVNYRWLGGMLTNFSTIRKSVRKLEIIEEMENSGQIDLLTKKEKLMILRKKEKLDKYLGGVRHMKKIPDMIFVIDVAKEKIAVAEARKLHIPIVAPLDTNCDPDLVDYPIPGNDDAIRSIRLFCKEMSEAILEGRELMQEEIVHADENSEEIEFVSNEEKEEMLAEIQKEITQGAE</sequence>
<organism>
    <name type="scientific">Helicobacter pylori (strain J99 / ATCC 700824)</name>
    <name type="common">Campylobacter pylori J99</name>
    <dbReference type="NCBI Taxonomy" id="85963"/>
    <lineage>
        <taxon>Bacteria</taxon>
        <taxon>Pseudomonadati</taxon>
        <taxon>Campylobacterota</taxon>
        <taxon>Epsilonproteobacteria</taxon>
        <taxon>Campylobacterales</taxon>
        <taxon>Helicobacteraceae</taxon>
        <taxon>Helicobacter</taxon>
    </lineage>
</organism>
<protein>
    <recommendedName>
        <fullName evidence="1">Small ribosomal subunit protein uS2</fullName>
    </recommendedName>
    <alternativeName>
        <fullName>30S ribosomal protein S2</fullName>
    </alternativeName>
</protein>
<dbReference type="EMBL" id="AE001439">
    <property type="protein sequence ID" value="AAD07028.1"/>
    <property type="molecule type" value="Genomic_DNA"/>
</dbReference>
<dbReference type="PIR" id="H71804">
    <property type="entry name" value="H71804"/>
</dbReference>
<dbReference type="RefSeq" id="WP_000258276.1">
    <property type="nucleotide sequence ID" value="NZ_CP011330.1"/>
</dbReference>
<dbReference type="SMR" id="Q9ZJ70"/>
<dbReference type="KEGG" id="hpj:jhp_1445"/>
<dbReference type="PATRIC" id="fig|85963.30.peg.1098"/>
<dbReference type="eggNOG" id="COG0052">
    <property type="taxonomic scope" value="Bacteria"/>
</dbReference>
<dbReference type="Proteomes" id="UP000000804">
    <property type="component" value="Chromosome"/>
</dbReference>
<dbReference type="GO" id="GO:0022627">
    <property type="term" value="C:cytosolic small ribosomal subunit"/>
    <property type="evidence" value="ECO:0007669"/>
    <property type="project" value="TreeGrafter"/>
</dbReference>
<dbReference type="GO" id="GO:0003735">
    <property type="term" value="F:structural constituent of ribosome"/>
    <property type="evidence" value="ECO:0007669"/>
    <property type="project" value="InterPro"/>
</dbReference>
<dbReference type="GO" id="GO:0006412">
    <property type="term" value="P:translation"/>
    <property type="evidence" value="ECO:0007669"/>
    <property type="project" value="UniProtKB-UniRule"/>
</dbReference>
<dbReference type="CDD" id="cd01425">
    <property type="entry name" value="RPS2"/>
    <property type="match status" value="1"/>
</dbReference>
<dbReference type="FunFam" id="1.10.287.610:FF:000001">
    <property type="entry name" value="30S ribosomal protein S2"/>
    <property type="match status" value="1"/>
</dbReference>
<dbReference type="Gene3D" id="3.40.50.10490">
    <property type="entry name" value="Glucose-6-phosphate isomerase like protein, domain 1"/>
    <property type="match status" value="1"/>
</dbReference>
<dbReference type="Gene3D" id="1.10.287.610">
    <property type="entry name" value="Helix hairpin bin"/>
    <property type="match status" value="1"/>
</dbReference>
<dbReference type="HAMAP" id="MF_00291_B">
    <property type="entry name" value="Ribosomal_uS2_B"/>
    <property type="match status" value="1"/>
</dbReference>
<dbReference type="InterPro" id="IPR001865">
    <property type="entry name" value="Ribosomal_uS2"/>
</dbReference>
<dbReference type="InterPro" id="IPR005706">
    <property type="entry name" value="Ribosomal_uS2_bac/mit/plastid"/>
</dbReference>
<dbReference type="InterPro" id="IPR018130">
    <property type="entry name" value="Ribosomal_uS2_CS"/>
</dbReference>
<dbReference type="InterPro" id="IPR023591">
    <property type="entry name" value="Ribosomal_uS2_flav_dom_sf"/>
</dbReference>
<dbReference type="NCBIfam" id="TIGR01011">
    <property type="entry name" value="rpsB_bact"/>
    <property type="match status" value="1"/>
</dbReference>
<dbReference type="PANTHER" id="PTHR12534">
    <property type="entry name" value="30S RIBOSOMAL PROTEIN S2 PROKARYOTIC AND ORGANELLAR"/>
    <property type="match status" value="1"/>
</dbReference>
<dbReference type="PANTHER" id="PTHR12534:SF0">
    <property type="entry name" value="SMALL RIBOSOMAL SUBUNIT PROTEIN US2M"/>
    <property type="match status" value="1"/>
</dbReference>
<dbReference type="Pfam" id="PF00318">
    <property type="entry name" value="Ribosomal_S2"/>
    <property type="match status" value="1"/>
</dbReference>
<dbReference type="PRINTS" id="PR00395">
    <property type="entry name" value="RIBOSOMALS2"/>
</dbReference>
<dbReference type="SUPFAM" id="SSF52313">
    <property type="entry name" value="Ribosomal protein S2"/>
    <property type="match status" value="1"/>
</dbReference>
<dbReference type="PROSITE" id="PS00962">
    <property type="entry name" value="RIBOSOMAL_S2_1"/>
    <property type="match status" value="1"/>
</dbReference>
<dbReference type="PROSITE" id="PS00963">
    <property type="entry name" value="RIBOSOMAL_S2_2"/>
    <property type="match status" value="1"/>
</dbReference>
<reference key="1">
    <citation type="journal article" date="1999" name="Nature">
        <title>Genomic sequence comparison of two unrelated isolates of the human gastric pathogen Helicobacter pylori.</title>
        <authorList>
            <person name="Alm R.A."/>
            <person name="Ling L.-S.L."/>
            <person name="Moir D.T."/>
            <person name="King B.L."/>
            <person name="Brown E.D."/>
            <person name="Doig P.C."/>
            <person name="Smith D.R."/>
            <person name="Noonan B."/>
            <person name="Guild B.C."/>
            <person name="deJonge B.L."/>
            <person name="Carmel G."/>
            <person name="Tummino P.J."/>
            <person name="Caruso A."/>
            <person name="Uria-Nickelsen M."/>
            <person name="Mills D.M."/>
            <person name="Ives C."/>
            <person name="Gibson R."/>
            <person name="Merberg D."/>
            <person name="Mills S.D."/>
            <person name="Jiang Q."/>
            <person name="Taylor D.E."/>
            <person name="Vovis G.F."/>
            <person name="Trust T.J."/>
        </authorList>
    </citation>
    <scope>NUCLEOTIDE SEQUENCE [LARGE SCALE GENOMIC DNA]</scope>
    <source>
        <strain>J99 / ATCC 700824</strain>
    </source>
</reference>
<name>RS2_HELPJ</name>
<comment type="similarity">
    <text evidence="1">Belongs to the universal ribosomal protein uS2 family.</text>
</comment>
<gene>
    <name type="primary">rpsB</name>
    <name type="ordered locus">jhp_1445</name>
</gene>
<accession>Q9ZJ70</accession>
<feature type="chain" id="PRO_0000134179" description="Small ribosomal subunit protein uS2">
    <location>
        <begin position="1"/>
        <end position="264"/>
    </location>
</feature>
<evidence type="ECO:0000305" key="1"/>
<keyword id="KW-0687">Ribonucleoprotein</keyword>
<keyword id="KW-0689">Ribosomal protein</keyword>